<dbReference type="GO" id="GO:0005576">
    <property type="term" value="C:extracellular region"/>
    <property type="evidence" value="ECO:0007669"/>
    <property type="project" value="UniProtKB-SubCell"/>
</dbReference>
<dbReference type="GO" id="GO:0035792">
    <property type="term" value="C:host cell postsynaptic membrane"/>
    <property type="evidence" value="ECO:0007669"/>
    <property type="project" value="UniProtKB-KW"/>
</dbReference>
<dbReference type="GO" id="GO:0030550">
    <property type="term" value="F:acetylcholine receptor inhibitor activity"/>
    <property type="evidence" value="ECO:0007669"/>
    <property type="project" value="UniProtKB-KW"/>
</dbReference>
<dbReference type="GO" id="GO:0090729">
    <property type="term" value="F:toxin activity"/>
    <property type="evidence" value="ECO:0007669"/>
    <property type="project" value="UniProtKB-KW"/>
</dbReference>
<comment type="function">
    <text evidence="2">Alpha-conotoxins act on postsynaptic membranes, they bind to the nicotinic acetylcholine receptors (nAChR) and thus inhibit them. This toxin inhibits muscle nAChRs with moderate potency (IC(50)=11 uM on alpha-1-beta-1-delta-epsilon/CHRNA1-CHRNB1-CHRND-CHRNE (adult), and IC(50)=13 uM on alpha-1-beta-1-gamma-delta/CHRNA1-CHRNB1-CHRNG-CHRND (fetal)).</text>
</comment>
<comment type="subcellular location">
    <subcellularLocation>
        <location evidence="2">Secreted</location>
    </subcellularLocation>
</comment>
<comment type="tissue specificity">
    <text evidence="5">Expressed by the venom duct.</text>
</comment>
<comment type="domain">
    <text evidence="4">The cysteine framework is I (CC-C-C). Alpha3/5 pattern.</text>
</comment>
<comment type="mass spectrometry" mass="1620.92" method="MALDI" evidence="2"/>
<comment type="miscellaneous">
    <text evidence="2">Negative results: is not active on all neuronal nAChR tested (alpha-2-beta-4/CHRNA2-CHRNB4, alpha-4-beta-2/CHRNA4-CHRNB2, alpha-4-beta-4/CHRNA4-CHRNB4, alpha-7/CHRNA7, and alpha-9-alpha-10/CHRNA9-CHRNA10) (IC(50)&gt;10 uM).</text>
</comment>
<comment type="similarity">
    <text evidence="4">Belongs to the conotoxin A superfamily.</text>
</comment>
<evidence type="ECO:0000250" key="1">
    <source>
        <dbReference type="UniProtKB" id="P01521"/>
    </source>
</evidence>
<evidence type="ECO:0000269" key="2">
    <source>
    </source>
</evidence>
<evidence type="ECO:0000303" key="3">
    <source>
    </source>
</evidence>
<evidence type="ECO:0000305" key="4"/>
<evidence type="ECO:0000305" key="5">
    <source>
    </source>
</evidence>
<accession>P0DQQ6</accession>
<organism>
    <name type="scientific">Conus milneedwardsi</name>
    <name type="common">Glory of India cone snail</name>
    <dbReference type="NCBI Taxonomy" id="2825866"/>
    <lineage>
        <taxon>Eukaryota</taxon>
        <taxon>Metazoa</taxon>
        <taxon>Spiralia</taxon>
        <taxon>Lophotrochozoa</taxon>
        <taxon>Mollusca</taxon>
        <taxon>Gastropoda</taxon>
        <taxon>Caenogastropoda</taxon>
        <taxon>Neogastropoda</taxon>
        <taxon>Conoidea</taxon>
        <taxon>Conidae</taxon>
        <taxon>Conus</taxon>
        <taxon>Leptoconus</taxon>
    </lineage>
</organism>
<name>CA1A_CONMD</name>
<keyword id="KW-0008">Acetylcholine receptor inhibiting toxin</keyword>
<keyword id="KW-0027">Amidation</keyword>
<keyword id="KW-0903">Direct protein sequencing</keyword>
<keyword id="KW-1015">Disulfide bond</keyword>
<keyword id="KW-0528">Neurotoxin</keyword>
<keyword id="KW-0629">Postsynaptic neurotoxin</keyword>
<keyword id="KW-0964">Secreted</keyword>
<keyword id="KW-0800">Toxin</keyword>
<feature type="peptide" id="PRO_0000453220" description="Alpha-conotoxin MilIA" evidence="2">
    <location>
        <begin position="1"/>
        <end position="14"/>
    </location>
</feature>
<feature type="modified residue" description="Cysteine amide" evidence="2">
    <location>
        <position position="14"/>
    </location>
</feature>
<feature type="disulfide bond" evidence="1">
    <location>
        <begin position="3"/>
        <end position="8"/>
    </location>
</feature>
<feature type="disulfide bond" evidence="1">
    <location>
        <begin position="4"/>
        <end position="14"/>
    </location>
</feature>
<feature type="mutagenesis site" description="In MilIA[Delta-1, M2R, M9G, N10K, H11K]; important increase in ability to inhibit both fetal (820-fold) and adult (450-fold) muscle nAChRs, as well as gain of ability to inhibit alpha-9-alpha-10/CHRNA9-CHRNA10 nAChR (IC(50)=0.5 uM); when associated with G-9; K-10 and K-11." evidence="2">
    <original>DM</original>
    <variation>R</variation>
    <location>
        <begin position="1"/>
        <end position="2"/>
    </location>
</feature>
<feature type="mutagenesis site" description="Important increase (22-fold) in ability to inhibit fetal muscle nAChR and loss of ability to inhibit adult nAChR that permits to strongly discriminate between the two types of muscle nAChRs. In MilIA[Delta-1, M2R, M9G, N10K, H11K]; important increase in ability to inhibit both fetal (820-fold) and adult (450-fold) muscle nAChRs, as well as gain of ability to inhibit alpha-9-alpha-10/CHRNA9-CHRNA10 nAChR (IC(50)=0.5 uM); when associated with R-2; K-10 and K-11." evidence="2">
    <original>M</original>
    <variation>G</variation>
    <location>
        <position position="9"/>
    </location>
</feature>
<feature type="mutagenesis site" description="Moderate increase (3-fold) in ability to inhibit fetal muscle nAChR, and loss of ability to inhibit adult nAChR, that permits to strongly discriminate between the two types of muscle nAChRs. In MilIA[Delta-1, M2R, M9G, N10K, H11K]; important increase in ability to inhibit both fetal (820-fold) and adult (450-fold) muscle nAChRs, as well as gain of ability to inhibit alpha-9-alpha-10/CHRNA9-CHRNA10 nAChR (IC(50)=0.5 uM); when associated with R-2; G-9 and K-11." evidence="2">
    <original>N</original>
    <variation>K</variation>
    <location>
        <position position="10"/>
    </location>
</feature>
<feature type="mutagenesis site" description="In MilIA[Delta-1, M2R, M9G, N10K, H11K]; important increase in ability to inhibit both fetal (820-fold) and adult (450-fold) muscle nAChRs, as well as gain of ability to inhibit alpha-9-alpha-10/CHRNA9-CHRNA10 nAChR (IC(50)=0.5 uM); when associated with R-2; G-9 and K-10." evidence="2">
    <original>H</original>
    <variation>K</variation>
    <location>
        <position position="11"/>
    </location>
</feature>
<reference key="1">
    <citation type="journal article" date="2019" name="Mar. Drugs">
        <title>Structure-function elucidation of a new alpha-conotoxin, MilIA, from Conus milneedwardsi.</title>
        <authorList>
            <person name="Peigneur S."/>
            <person name="Devi P."/>
            <person name="Seldeslachts A."/>
            <person name="Ravichandran S."/>
            <person name="Quinton L."/>
            <person name="Tytgat J."/>
        </authorList>
    </citation>
    <scope>PROTEIN SEQUENCE</scope>
    <scope>FUNCTION</scope>
    <scope>AMIDATION AT CYS-14</scope>
    <scope>SUBCELLULAR LOCATION</scope>
    <scope>MASS SPECTROMETRY</scope>
    <scope>MUTAGENESIS OF 1-ASP-MET-2; MET-9; ASN-10 AND HIS-11</scope>
    <source>
        <tissue>Venom</tissue>
    </source>
</reference>
<sequence length="14" mass="1626">DMCCHPACMNHFNC</sequence>
<proteinExistence type="evidence at protein level"/>
<protein>
    <recommendedName>
        <fullName evidence="3">Alpha-conotoxin MilIA</fullName>
    </recommendedName>
</protein>